<accession>P0ACP3</accession>
<accession>P21168</accession>
<comment type="function">
    <text evidence="1">Global transcriptional regulator, which plays an important role in the regulation of carbon metabolism.</text>
</comment>
<comment type="subunit">
    <text evidence="1">Homotetramer.</text>
</comment>
<feature type="chain" id="PRO_0000107946" description="Catabolite repressor/activator">
    <location>
        <begin position="1"/>
        <end position="334"/>
    </location>
</feature>
<feature type="domain" description="HTH lacI-type" evidence="2">
    <location>
        <begin position="1"/>
        <end position="58"/>
    </location>
</feature>
<feature type="DNA-binding region" description="H-T-H motif" evidence="2">
    <location>
        <begin position="3"/>
        <end position="22"/>
    </location>
</feature>
<organism>
    <name type="scientific">Escherichia coli O157:H7</name>
    <dbReference type="NCBI Taxonomy" id="83334"/>
    <lineage>
        <taxon>Bacteria</taxon>
        <taxon>Pseudomonadati</taxon>
        <taxon>Pseudomonadota</taxon>
        <taxon>Gammaproteobacteria</taxon>
        <taxon>Enterobacterales</taxon>
        <taxon>Enterobacteriaceae</taxon>
        <taxon>Escherichia</taxon>
    </lineage>
</organism>
<dbReference type="EMBL" id="AE005174">
    <property type="protein sequence ID" value="AAG54384.1"/>
    <property type="molecule type" value="Genomic_DNA"/>
</dbReference>
<dbReference type="EMBL" id="BA000007">
    <property type="protein sequence ID" value="BAB33507.1"/>
    <property type="molecule type" value="Genomic_DNA"/>
</dbReference>
<dbReference type="PIR" id="D85490">
    <property type="entry name" value="D85490"/>
</dbReference>
<dbReference type="PIR" id="D90639">
    <property type="entry name" value="D90639"/>
</dbReference>
<dbReference type="RefSeq" id="NP_308111.1">
    <property type="nucleotide sequence ID" value="NC_002695.1"/>
</dbReference>
<dbReference type="RefSeq" id="WP_000762401.1">
    <property type="nucleotide sequence ID" value="NZ_VOAI01000002.1"/>
</dbReference>
<dbReference type="SMR" id="P0ACP3"/>
<dbReference type="STRING" id="155864.Z0090"/>
<dbReference type="GeneID" id="86862590"/>
<dbReference type="GeneID" id="913527"/>
<dbReference type="KEGG" id="ece:Z0090"/>
<dbReference type="KEGG" id="ecs:ECs_0084"/>
<dbReference type="PATRIC" id="fig|386585.9.peg.184"/>
<dbReference type="eggNOG" id="COG1609">
    <property type="taxonomic scope" value="Bacteria"/>
</dbReference>
<dbReference type="HOGENOM" id="CLU_037628_6_0_6"/>
<dbReference type="OMA" id="NSRKAGY"/>
<dbReference type="Proteomes" id="UP000000558">
    <property type="component" value="Chromosome"/>
</dbReference>
<dbReference type="Proteomes" id="UP000002519">
    <property type="component" value="Chromosome"/>
</dbReference>
<dbReference type="GO" id="GO:0003700">
    <property type="term" value="F:DNA-binding transcription factor activity"/>
    <property type="evidence" value="ECO:0007669"/>
    <property type="project" value="TreeGrafter"/>
</dbReference>
<dbReference type="GO" id="GO:0000976">
    <property type="term" value="F:transcription cis-regulatory region binding"/>
    <property type="evidence" value="ECO:0007669"/>
    <property type="project" value="TreeGrafter"/>
</dbReference>
<dbReference type="GO" id="GO:0009750">
    <property type="term" value="P:response to fructose"/>
    <property type="evidence" value="ECO:0007669"/>
    <property type="project" value="InterPro"/>
</dbReference>
<dbReference type="CDD" id="cd01392">
    <property type="entry name" value="HTH_LacI"/>
    <property type="match status" value="1"/>
</dbReference>
<dbReference type="CDD" id="cd06274">
    <property type="entry name" value="PBP1_FruR"/>
    <property type="match status" value="1"/>
</dbReference>
<dbReference type="FunFam" id="1.10.260.40:FF:000008">
    <property type="entry name" value="Fructose repressor (Catabolite repressor/activator)"/>
    <property type="match status" value="1"/>
</dbReference>
<dbReference type="FunFam" id="3.40.50.2300:FF:000022">
    <property type="entry name" value="Fructose repressor (Catabolite repressor/activator)"/>
    <property type="match status" value="1"/>
</dbReference>
<dbReference type="FunFam" id="3.40.50.2300:FF:000049">
    <property type="entry name" value="Fructose repressor FruR"/>
    <property type="match status" value="1"/>
</dbReference>
<dbReference type="Gene3D" id="3.40.50.2300">
    <property type="match status" value="2"/>
</dbReference>
<dbReference type="Gene3D" id="1.10.260.40">
    <property type="entry name" value="lambda repressor-like DNA-binding domains"/>
    <property type="match status" value="1"/>
</dbReference>
<dbReference type="InterPro" id="IPR012781">
    <property type="entry name" value="Fruct_sucro_rep"/>
</dbReference>
<dbReference type="InterPro" id="IPR000843">
    <property type="entry name" value="HTH_LacI"/>
</dbReference>
<dbReference type="InterPro" id="IPR010982">
    <property type="entry name" value="Lambda_DNA-bd_dom_sf"/>
</dbReference>
<dbReference type="InterPro" id="IPR001761">
    <property type="entry name" value="Peripla_BP/Lac1_sug-bd_dom"/>
</dbReference>
<dbReference type="InterPro" id="IPR028082">
    <property type="entry name" value="Peripla_BP_I"/>
</dbReference>
<dbReference type="NCBIfam" id="TIGR02417">
    <property type="entry name" value="fruct_sucro_rep"/>
    <property type="match status" value="1"/>
</dbReference>
<dbReference type="NCBIfam" id="NF008452">
    <property type="entry name" value="PRK11303.1"/>
    <property type="match status" value="1"/>
</dbReference>
<dbReference type="PANTHER" id="PTHR30146:SF45">
    <property type="entry name" value="CATABOLITE REPRESSOR_ACTIVATOR"/>
    <property type="match status" value="1"/>
</dbReference>
<dbReference type="PANTHER" id="PTHR30146">
    <property type="entry name" value="LACI-RELATED TRANSCRIPTIONAL REPRESSOR"/>
    <property type="match status" value="1"/>
</dbReference>
<dbReference type="Pfam" id="PF00356">
    <property type="entry name" value="LacI"/>
    <property type="match status" value="1"/>
</dbReference>
<dbReference type="Pfam" id="PF00532">
    <property type="entry name" value="Peripla_BP_1"/>
    <property type="match status" value="1"/>
</dbReference>
<dbReference type="SMART" id="SM00354">
    <property type="entry name" value="HTH_LACI"/>
    <property type="match status" value="1"/>
</dbReference>
<dbReference type="SUPFAM" id="SSF47413">
    <property type="entry name" value="lambda repressor-like DNA-binding domains"/>
    <property type="match status" value="1"/>
</dbReference>
<dbReference type="SUPFAM" id="SSF53822">
    <property type="entry name" value="Periplasmic binding protein-like I"/>
    <property type="match status" value="1"/>
</dbReference>
<dbReference type="PROSITE" id="PS00356">
    <property type="entry name" value="HTH_LACI_1"/>
    <property type="match status" value="1"/>
</dbReference>
<dbReference type="PROSITE" id="PS50932">
    <property type="entry name" value="HTH_LACI_2"/>
    <property type="match status" value="1"/>
</dbReference>
<reference key="1">
    <citation type="journal article" date="2001" name="Nature">
        <title>Genome sequence of enterohaemorrhagic Escherichia coli O157:H7.</title>
        <authorList>
            <person name="Perna N.T."/>
            <person name="Plunkett G. III"/>
            <person name="Burland V."/>
            <person name="Mau B."/>
            <person name="Glasner J.D."/>
            <person name="Rose D.J."/>
            <person name="Mayhew G.F."/>
            <person name="Evans P.S."/>
            <person name="Gregor J."/>
            <person name="Kirkpatrick H.A."/>
            <person name="Posfai G."/>
            <person name="Hackett J."/>
            <person name="Klink S."/>
            <person name="Boutin A."/>
            <person name="Shao Y."/>
            <person name="Miller L."/>
            <person name="Grotbeck E.J."/>
            <person name="Davis N.W."/>
            <person name="Lim A."/>
            <person name="Dimalanta E.T."/>
            <person name="Potamousis K."/>
            <person name="Apodaca J."/>
            <person name="Anantharaman T.S."/>
            <person name="Lin J."/>
            <person name="Yen G."/>
            <person name="Schwartz D.C."/>
            <person name="Welch R.A."/>
            <person name="Blattner F.R."/>
        </authorList>
    </citation>
    <scope>NUCLEOTIDE SEQUENCE [LARGE SCALE GENOMIC DNA]</scope>
    <source>
        <strain>O157:H7 / EDL933 / ATCC 700927 / EHEC</strain>
    </source>
</reference>
<reference key="2">
    <citation type="journal article" date="2001" name="DNA Res.">
        <title>Complete genome sequence of enterohemorrhagic Escherichia coli O157:H7 and genomic comparison with a laboratory strain K-12.</title>
        <authorList>
            <person name="Hayashi T."/>
            <person name="Makino K."/>
            <person name="Ohnishi M."/>
            <person name="Kurokawa K."/>
            <person name="Ishii K."/>
            <person name="Yokoyama K."/>
            <person name="Han C.-G."/>
            <person name="Ohtsubo E."/>
            <person name="Nakayama K."/>
            <person name="Murata T."/>
            <person name="Tanaka M."/>
            <person name="Tobe T."/>
            <person name="Iida T."/>
            <person name="Takami H."/>
            <person name="Honda T."/>
            <person name="Sasakawa C."/>
            <person name="Ogasawara N."/>
            <person name="Yasunaga T."/>
            <person name="Kuhara S."/>
            <person name="Shiba T."/>
            <person name="Hattori M."/>
            <person name="Shinagawa H."/>
        </authorList>
    </citation>
    <scope>NUCLEOTIDE SEQUENCE [LARGE SCALE GENOMIC DNA]</scope>
    <source>
        <strain>O157:H7 / Sakai / RIMD 0509952 / EHEC</strain>
    </source>
</reference>
<name>CRA_ECO57</name>
<proteinExistence type="inferred from homology"/>
<evidence type="ECO:0000250" key="1"/>
<evidence type="ECO:0000255" key="2">
    <source>
        <dbReference type="PROSITE-ProRule" id="PRU00111"/>
    </source>
</evidence>
<keyword id="KW-0010">Activator</keyword>
<keyword id="KW-0238">DNA-binding</keyword>
<keyword id="KW-1185">Reference proteome</keyword>
<keyword id="KW-0678">Repressor</keyword>
<keyword id="KW-0804">Transcription</keyword>
<keyword id="KW-0805">Transcription regulation</keyword>
<protein>
    <recommendedName>
        <fullName>Catabolite repressor/activator</fullName>
    </recommendedName>
    <alternativeName>
        <fullName>Fructose repressor</fullName>
    </alternativeName>
</protein>
<sequence length="334" mass="37999">MKLDEIARLAGVSRTTASYVINGKAKQYRVSDKTVEKVMAVVREHNYHPNAVAAGLRAGRTRSIGLVIPDLENTSYTRIANYLERQARQRGYQLLIACSEDQPDNEMRCIEHLLQRQVDAIIVSTSLPPEHPFYQRWANDPFPIVALDRALDREHFTSVVGADQDDAEMLAEELRKFPAETVLYLGALPELSVSFLREQGFRTAWKDDPREVHFLYANSYEREAAAQLFEKWLETHPMPQALFTTSFALLQGVMDVTLRRDGKLPSDLAIATFGDNELLDFLQCPVLAVAQRHRDVAERVLEIVLASLDEPRKPKPGLTRIKRNLYRRGVLSRS</sequence>
<gene>
    <name type="primary">cra</name>
    <name type="synonym">fruR</name>
    <name type="ordered locus">Z0090</name>
    <name type="ordered locus">ECs0084</name>
</gene>